<sequence length="299" mass="33777">MKLKEILSMETKELILKANRMTSNLKLDLCSIVNAKSGICDQDCKFCAQSSLYNTGVKKYPLLDKESILEKAKEAEKMGAIRFGIVTSGKRLTRKEILKVAKIIEFLKANTNLKICASLGVLEKDELRYLKENGLDRYHHNLETSPGFFRNICTTHTFYDRVKTVENAKNVELEVCSGGIFGVGENFDDRLELAKILKDLEVDSVPINFLIPIRGTPFENFQKLDVVERIRTIAMFRVVLGENVTIKIAAGREDFGDFQALAFFAGANGMIVGGYLTLKGRSYDDDIKLIEGLRELMRW</sequence>
<reference key="1">
    <citation type="submission" date="2007-05" db="EMBL/GenBank/DDBJ databases">
        <title>Complete sequence of Thermotoga petrophila RKU-1.</title>
        <authorList>
            <consortium name="US DOE Joint Genome Institute"/>
            <person name="Copeland A."/>
            <person name="Lucas S."/>
            <person name="Lapidus A."/>
            <person name="Barry K."/>
            <person name="Glavina del Rio T."/>
            <person name="Dalin E."/>
            <person name="Tice H."/>
            <person name="Pitluck S."/>
            <person name="Sims D."/>
            <person name="Brettin T."/>
            <person name="Bruce D."/>
            <person name="Detter J.C."/>
            <person name="Han C."/>
            <person name="Tapia R."/>
            <person name="Schmutz J."/>
            <person name="Larimer F."/>
            <person name="Land M."/>
            <person name="Hauser L."/>
            <person name="Kyrpides N."/>
            <person name="Mikhailova N."/>
            <person name="Nelson K."/>
            <person name="Gogarten J.P."/>
            <person name="Noll K."/>
            <person name="Richardson P."/>
        </authorList>
    </citation>
    <scope>NUCLEOTIDE SEQUENCE [LARGE SCALE GENOMIC DNA]</scope>
    <source>
        <strain>ATCC BAA-488 / DSM 13995 / JCM 10881 / RKU-1</strain>
    </source>
</reference>
<evidence type="ECO:0000255" key="1">
    <source>
        <dbReference type="HAMAP-Rule" id="MF_01694"/>
    </source>
</evidence>
<evidence type="ECO:0000255" key="2">
    <source>
        <dbReference type="PROSITE-ProRule" id="PRU01266"/>
    </source>
</evidence>
<dbReference type="EC" id="2.8.1.6" evidence="1"/>
<dbReference type="EMBL" id="CP000702">
    <property type="protein sequence ID" value="ABQ46580.1"/>
    <property type="molecule type" value="Genomic_DNA"/>
</dbReference>
<dbReference type="RefSeq" id="WP_011943182.1">
    <property type="nucleotide sequence ID" value="NC_009486.1"/>
</dbReference>
<dbReference type="SMR" id="A5IK57"/>
<dbReference type="STRING" id="390874.Tpet_0559"/>
<dbReference type="KEGG" id="tpt:Tpet_0559"/>
<dbReference type="eggNOG" id="COG0502">
    <property type="taxonomic scope" value="Bacteria"/>
</dbReference>
<dbReference type="HOGENOM" id="CLU_033172_2_1_0"/>
<dbReference type="UniPathway" id="UPA00078">
    <property type="reaction ID" value="UER00162"/>
</dbReference>
<dbReference type="Proteomes" id="UP000006558">
    <property type="component" value="Chromosome"/>
</dbReference>
<dbReference type="GO" id="GO:0051537">
    <property type="term" value="F:2 iron, 2 sulfur cluster binding"/>
    <property type="evidence" value="ECO:0007669"/>
    <property type="project" value="UniProtKB-KW"/>
</dbReference>
<dbReference type="GO" id="GO:0051539">
    <property type="term" value="F:4 iron, 4 sulfur cluster binding"/>
    <property type="evidence" value="ECO:0007669"/>
    <property type="project" value="UniProtKB-KW"/>
</dbReference>
<dbReference type="GO" id="GO:0004076">
    <property type="term" value="F:biotin synthase activity"/>
    <property type="evidence" value="ECO:0007669"/>
    <property type="project" value="UniProtKB-UniRule"/>
</dbReference>
<dbReference type="GO" id="GO:0005506">
    <property type="term" value="F:iron ion binding"/>
    <property type="evidence" value="ECO:0007669"/>
    <property type="project" value="UniProtKB-UniRule"/>
</dbReference>
<dbReference type="GO" id="GO:0009102">
    <property type="term" value="P:biotin biosynthetic process"/>
    <property type="evidence" value="ECO:0007669"/>
    <property type="project" value="UniProtKB-UniRule"/>
</dbReference>
<dbReference type="CDD" id="cd01335">
    <property type="entry name" value="Radical_SAM"/>
    <property type="match status" value="1"/>
</dbReference>
<dbReference type="Gene3D" id="3.20.20.70">
    <property type="entry name" value="Aldolase class I"/>
    <property type="match status" value="1"/>
</dbReference>
<dbReference type="HAMAP" id="MF_01694">
    <property type="entry name" value="BioB"/>
    <property type="match status" value="1"/>
</dbReference>
<dbReference type="InterPro" id="IPR013785">
    <property type="entry name" value="Aldolase_TIM"/>
</dbReference>
<dbReference type="InterPro" id="IPR010722">
    <property type="entry name" value="BATS_dom"/>
</dbReference>
<dbReference type="InterPro" id="IPR002684">
    <property type="entry name" value="Biotin_synth/BioAB"/>
</dbReference>
<dbReference type="InterPro" id="IPR024177">
    <property type="entry name" value="Biotin_synthase"/>
</dbReference>
<dbReference type="InterPro" id="IPR006638">
    <property type="entry name" value="Elp3/MiaA/NifB-like_rSAM"/>
</dbReference>
<dbReference type="InterPro" id="IPR007197">
    <property type="entry name" value="rSAM"/>
</dbReference>
<dbReference type="NCBIfam" id="TIGR00433">
    <property type="entry name" value="bioB"/>
    <property type="match status" value="1"/>
</dbReference>
<dbReference type="PANTHER" id="PTHR22976">
    <property type="entry name" value="BIOTIN SYNTHASE"/>
    <property type="match status" value="1"/>
</dbReference>
<dbReference type="PANTHER" id="PTHR22976:SF2">
    <property type="entry name" value="BIOTIN SYNTHASE, MITOCHONDRIAL"/>
    <property type="match status" value="1"/>
</dbReference>
<dbReference type="Pfam" id="PF06968">
    <property type="entry name" value="BATS"/>
    <property type="match status" value="1"/>
</dbReference>
<dbReference type="Pfam" id="PF04055">
    <property type="entry name" value="Radical_SAM"/>
    <property type="match status" value="1"/>
</dbReference>
<dbReference type="PIRSF" id="PIRSF001619">
    <property type="entry name" value="Biotin_synth"/>
    <property type="match status" value="1"/>
</dbReference>
<dbReference type="SFLD" id="SFLDG01278">
    <property type="entry name" value="biotin_synthase_like"/>
    <property type="match status" value="1"/>
</dbReference>
<dbReference type="SFLD" id="SFLDS00029">
    <property type="entry name" value="Radical_SAM"/>
    <property type="match status" value="1"/>
</dbReference>
<dbReference type="SMART" id="SM00876">
    <property type="entry name" value="BATS"/>
    <property type="match status" value="1"/>
</dbReference>
<dbReference type="SMART" id="SM00729">
    <property type="entry name" value="Elp3"/>
    <property type="match status" value="1"/>
</dbReference>
<dbReference type="SUPFAM" id="SSF102114">
    <property type="entry name" value="Radical SAM enzymes"/>
    <property type="match status" value="1"/>
</dbReference>
<dbReference type="PROSITE" id="PS51918">
    <property type="entry name" value="RADICAL_SAM"/>
    <property type="match status" value="1"/>
</dbReference>
<organism>
    <name type="scientific">Thermotoga petrophila (strain ATCC BAA-488 / DSM 13995 / JCM 10881 / RKU-1)</name>
    <dbReference type="NCBI Taxonomy" id="390874"/>
    <lineage>
        <taxon>Bacteria</taxon>
        <taxon>Thermotogati</taxon>
        <taxon>Thermotogota</taxon>
        <taxon>Thermotogae</taxon>
        <taxon>Thermotogales</taxon>
        <taxon>Thermotogaceae</taxon>
        <taxon>Thermotoga</taxon>
    </lineage>
</organism>
<proteinExistence type="inferred from homology"/>
<keyword id="KW-0001">2Fe-2S</keyword>
<keyword id="KW-0004">4Fe-4S</keyword>
<keyword id="KW-0093">Biotin biosynthesis</keyword>
<keyword id="KW-0408">Iron</keyword>
<keyword id="KW-0411">Iron-sulfur</keyword>
<keyword id="KW-0479">Metal-binding</keyword>
<keyword id="KW-0949">S-adenosyl-L-methionine</keyword>
<keyword id="KW-0808">Transferase</keyword>
<feature type="chain" id="PRO_0000381685" description="Biotin synthase">
    <location>
        <begin position="1"/>
        <end position="299"/>
    </location>
</feature>
<feature type="domain" description="Radical SAM core" evidence="2">
    <location>
        <begin position="22"/>
        <end position="252"/>
    </location>
</feature>
<feature type="binding site" evidence="1">
    <location>
        <position position="40"/>
    </location>
    <ligand>
        <name>[4Fe-4S] cluster</name>
        <dbReference type="ChEBI" id="CHEBI:49883"/>
        <note>4Fe-4S-S-AdoMet</note>
    </ligand>
</feature>
<feature type="binding site" evidence="1">
    <location>
        <position position="44"/>
    </location>
    <ligand>
        <name>[4Fe-4S] cluster</name>
        <dbReference type="ChEBI" id="CHEBI:49883"/>
        <note>4Fe-4S-S-AdoMet</note>
    </ligand>
</feature>
<feature type="binding site" evidence="1">
    <location>
        <position position="47"/>
    </location>
    <ligand>
        <name>[4Fe-4S] cluster</name>
        <dbReference type="ChEBI" id="CHEBI:49883"/>
        <note>4Fe-4S-S-AdoMet</note>
    </ligand>
</feature>
<feature type="binding site" evidence="1">
    <location>
        <position position="116"/>
    </location>
    <ligand>
        <name>[2Fe-2S] cluster</name>
        <dbReference type="ChEBI" id="CHEBI:190135"/>
    </ligand>
</feature>
<feature type="binding site" evidence="1">
    <location>
        <position position="176"/>
    </location>
    <ligand>
        <name>[2Fe-2S] cluster</name>
        <dbReference type="ChEBI" id="CHEBI:190135"/>
    </ligand>
</feature>
<feature type="binding site" evidence="1">
    <location>
        <position position="247"/>
    </location>
    <ligand>
        <name>[2Fe-2S] cluster</name>
        <dbReference type="ChEBI" id="CHEBI:190135"/>
    </ligand>
</feature>
<name>BIOB_THEP1</name>
<comment type="function">
    <text evidence="1">Catalyzes the conversion of dethiobiotin (DTB) to biotin by the insertion of a sulfur atom into dethiobiotin via a radical-based mechanism.</text>
</comment>
<comment type="catalytic activity">
    <reaction evidence="1">
        <text>(4R,5S)-dethiobiotin + (sulfur carrier)-SH + 2 reduced [2Fe-2S]-[ferredoxin] + 2 S-adenosyl-L-methionine = (sulfur carrier)-H + biotin + 2 5'-deoxyadenosine + 2 L-methionine + 2 oxidized [2Fe-2S]-[ferredoxin]</text>
        <dbReference type="Rhea" id="RHEA:22060"/>
        <dbReference type="Rhea" id="RHEA-COMP:10000"/>
        <dbReference type="Rhea" id="RHEA-COMP:10001"/>
        <dbReference type="Rhea" id="RHEA-COMP:14737"/>
        <dbReference type="Rhea" id="RHEA-COMP:14739"/>
        <dbReference type="ChEBI" id="CHEBI:17319"/>
        <dbReference type="ChEBI" id="CHEBI:29917"/>
        <dbReference type="ChEBI" id="CHEBI:33737"/>
        <dbReference type="ChEBI" id="CHEBI:33738"/>
        <dbReference type="ChEBI" id="CHEBI:57586"/>
        <dbReference type="ChEBI" id="CHEBI:57844"/>
        <dbReference type="ChEBI" id="CHEBI:59789"/>
        <dbReference type="ChEBI" id="CHEBI:64428"/>
        <dbReference type="ChEBI" id="CHEBI:149473"/>
        <dbReference type="EC" id="2.8.1.6"/>
    </reaction>
</comment>
<comment type="cofactor">
    <cofactor evidence="1">
        <name>[4Fe-4S] cluster</name>
        <dbReference type="ChEBI" id="CHEBI:49883"/>
    </cofactor>
    <text evidence="1">Binds 1 [4Fe-4S] cluster. The cluster is coordinated with 3 cysteines and an exchangeable S-adenosyl-L-methionine.</text>
</comment>
<comment type="cofactor">
    <cofactor evidence="1">
        <name>[2Fe-2S] cluster</name>
        <dbReference type="ChEBI" id="CHEBI:190135"/>
    </cofactor>
    <text evidence="1">Binds 1 [2Fe-2S] cluster. The cluster is coordinated with 3 cysteines and 1 arginine.</text>
</comment>
<comment type="pathway">
    <text evidence="1">Cofactor biosynthesis; biotin biosynthesis; biotin from 7,8-diaminononanoate: step 2/2.</text>
</comment>
<comment type="subunit">
    <text evidence="1">Homodimer.</text>
</comment>
<comment type="similarity">
    <text evidence="1">Belongs to the radical SAM superfamily. Biotin synthase family.</text>
</comment>
<protein>
    <recommendedName>
        <fullName evidence="1">Biotin synthase</fullName>
        <ecNumber evidence="1">2.8.1.6</ecNumber>
    </recommendedName>
</protein>
<accession>A5IK57</accession>
<gene>
    <name evidence="1" type="primary">bioB</name>
    <name type="ordered locus">Tpet_0559</name>
</gene>